<evidence type="ECO:0000255" key="1"/>
<evidence type="ECO:0000305" key="2"/>
<protein>
    <recommendedName>
        <fullName>Uncharacterized protein YqhV</fullName>
    </recommendedName>
</protein>
<gene>
    <name type="primary">yqhV</name>
    <name type="synonym">yqgE</name>
    <name type="ordered locus">BSU24440</name>
</gene>
<proteinExistence type="predicted"/>
<feature type="chain" id="PRO_0000049825" description="Uncharacterized protein YqhV">
    <location>
        <begin position="1"/>
        <end position="93"/>
    </location>
</feature>
<feature type="transmembrane region" description="Helical" evidence="1">
    <location>
        <begin position="15"/>
        <end position="35"/>
    </location>
</feature>
<feature type="transmembrane region" description="Helical" evidence="1">
    <location>
        <begin position="48"/>
        <end position="68"/>
    </location>
</feature>
<feature type="transmembrane region" description="Helical" evidence="1">
    <location>
        <begin position="72"/>
        <end position="92"/>
    </location>
</feature>
<comment type="subcellular location">
    <subcellularLocation>
        <location evidence="2">Cell membrane</location>
        <topology evidence="2">Multi-pass membrane protein</topology>
    </subcellularLocation>
</comment>
<keyword id="KW-1003">Cell membrane</keyword>
<keyword id="KW-0472">Membrane</keyword>
<keyword id="KW-1185">Reference proteome</keyword>
<keyword id="KW-0812">Transmembrane</keyword>
<keyword id="KW-1133">Transmembrane helix</keyword>
<dbReference type="EMBL" id="U35252">
    <property type="protein sequence ID" value="AAA76719.1"/>
    <property type="molecule type" value="Genomic_DNA"/>
</dbReference>
<dbReference type="EMBL" id="D84432">
    <property type="protein sequence ID" value="BAA12559.1"/>
    <property type="molecule type" value="Genomic_DNA"/>
</dbReference>
<dbReference type="EMBL" id="AL009126">
    <property type="protein sequence ID" value="CAB14375.1"/>
    <property type="molecule type" value="Genomic_DNA"/>
</dbReference>
<dbReference type="EMBL" id="X61962">
    <property type="status" value="NOT_ANNOTATED_CDS"/>
    <property type="molecule type" value="Genomic_DNA"/>
</dbReference>
<dbReference type="PIR" id="D69960">
    <property type="entry name" value="D69960"/>
</dbReference>
<dbReference type="RefSeq" id="NP_390324.1">
    <property type="nucleotide sequence ID" value="NC_000964.3"/>
</dbReference>
<dbReference type="RefSeq" id="WP_004398639.1">
    <property type="nucleotide sequence ID" value="NZ_OZ025638.1"/>
</dbReference>
<dbReference type="SMR" id="P49779"/>
<dbReference type="FunCoup" id="P49779">
    <property type="interactions" value="4"/>
</dbReference>
<dbReference type="STRING" id="224308.BSU24440"/>
<dbReference type="PaxDb" id="224308-BSU24440"/>
<dbReference type="EnsemblBacteria" id="CAB14375">
    <property type="protein sequence ID" value="CAB14375"/>
    <property type="gene ID" value="BSU_24440"/>
</dbReference>
<dbReference type="GeneID" id="938559"/>
<dbReference type="KEGG" id="bsu:BSU24440"/>
<dbReference type="PATRIC" id="fig|224308.179.peg.2662"/>
<dbReference type="eggNOG" id="ENOG5032Z8B">
    <property type="taxonomic scope" value="Bacteria"/>
</dbReference>
<dbReference type="InParanoid" id="P49779"/>
<dbReference type="OrthoDB" id="1726013at2"/>
<dbReference type="BioCyc" id="BSUB:BSU24440-MONOMER"/>
<dbReference type="Proteomes" id="UP000001570">
    <property type="component" value="Chromosome"/>
</dbReference>
<dbReference type="GO" id="GO:0005886">
    <property type="term" value="C:plasma membrane"/>
    <property type="evidence" value="ECO:0007669"/>
    <property type="project" value="UniProtKB-SubCell"/>
</dbReference>
<dbReference type="InterPro" id="IPR020390">
    <property type="entry name" value="Uncharacterised_YqhV"/>
</dbReference>
<dbReference type="Pfam" id="PF10942">
    <property type="entry name" value="DUF2619"/>
    <property type="match status" value="1"/>
</dbReference>
<sequence>MKFLLGNINSTVLTMAGLRVLSSMIELTAAIVMLVTNDVRKAVVVNSILAIVGPLIFIITMTVGIYQIAGQLSYAKLILIFTGVVLILAGVHK</sequence>
<organism>
    <name type="scientific">Bacillus subtilis (strain 168)</name>
    <dbReference type="NCBI Taxonomy" id="224308"/>
    <lineage>
        <taxon>Bacteria</taxon>
        <taxon>Bacillati</taxon>
        <taxon>Bacillota</taxon>
        <taxon>Bacilli</taxon>
        <taxon>Bacillales</taxon>
        <taxon>Bacillaceae</taxon>
        <taxon>Bacillus</taxon>
    </lineage>
</organism>
<name>YQHV_BACSU</name>
<accession>P49779</accession>
<reference key="1">
    <citation type="submission" date="1995-09" db="EMBL/GenBank/DDBJ databases">
        <authorList>
            <person name="Guerout-Fleury A.M."/>
            <person name="Gonzy-Treboul G."/>
            <person name="Stragier P."/>
        </authorList>
    </citation>
    <scope>NUCLEOTIDE SEQUENCE [GENOMIC DNA]</scope>
    <source>
        <strain>168 / JH642</strain>
    </source>
</reference>
<reference key="2">
    <citation type="journal article" date="1996" name="Microbiology">
        <title>Systematic sequencing of the 283 kb 210 degrees-232 degrees region of the Bacillus subtilis genome containing the skin element and many sporulation genes.</title>
        <authorList>
            <person name="Mizuno M."/>
            <person name="Masuda S."/>
            <person name="Takemaru K."/>
            <person name="Hosono S."/>
            <person name="Sato T."/>
            <person name="Takeuchi M."/>
            <person name="Kobayashi Y."/>
        </authorList>
    </citation>
    <scope>NUCLEOTIDE SEQUENCE [GENOMIC DNA]</scope>
    <source>
        <strain>168 / JH642</strain>
    </source>
</reference>
<reference key="3">
    <citation type="journal article" date="1997" name="Nature">
        <title>The complete genome sequence of the Gram-positive bacterium Bacillus subtilis.</title>
        <authorList>
            <person name="Kunst F."/>
            <person name="Ogasawara N."/>
            <person name="Moszer I."/>
            <person name="Albertini A.M."/>
            <person name="Alloni G."/>
            <person name="Azevedo V."/>
            <person name="Bertero M.G."/>
            <person name="Bessieres P."/>
            <person name="Bolotin A."/>
            <person name="Borchert S."/>
            <person name="Borriss R."/>
            <person name="Boursier L."/>
            <person name="Brans A."/>
            <person name="Braun M."/>
            <person name="Brignell S.C."/>
            <person name="Bron S."/>
            <person name="Brouillet S."/>
            <person name="Bruschi C.V."/>
            <person name="Caldwell B."/>
            <person name="Capuano V."/>
            <person name="Carter N.M."/>
            <person name="Choi S.-K."/>
            <person name="Codani J.-J."/>
            <person name="Connerton I.F."/>
            <person name="Cummings N.J."/>
            <person name="Daniel R.A."/>
            <person name="Denizot F."/>
            <person name="Devine K.M."/>
            <person name="Duesterhoeft A."/>
            <person name="Ehrlich S.D."/>
            <person name="Emmerson P.T."/>
            <person name="Entian K.-D."/>
            <person name="Errington J."/>
            <person name="Fabret C."/>
            <person name="Ferrari E."/>
            <person name="Foulger D."/>
            <person name="Fritz C."/>
            <person name="Fujita M."/>
            <person name="Fujita Y."/>
            <person name="Fuma S."/>
            <person name="Galizzi A."/>
            <person name="Galleron N."/>
            <person name="Ghim S.-Y."/>
            <person name="Glaser P."/>
            <person name="Goffeau A."/>
            <person name="Golightly E.J."/>
            <person name="Grandi G."/>
            <person name="Guiseppi G."/>
            <person name="Guy B.J."/>
            <person name="Haga K."/>
            <person name="Haiech J."/>
            <person name="Harwood C.R."/>
            <person name="Henaut A."/>
            <person name="Hilbert H."/>
            <person name="Holsappel S."/>
            <person name="Hosono S."/>
            <person name="Hullo M.-F."/>
            <person name="Itaya M."/>
            <person name="Jones L.-M."/>
            <person name="Joris B."/>
            <person name="Karamata D."/>
            <person name="Kasahara Y."/>
            <person name="Klaerr-Blanchard M."/>
            <person name="Klein C."/>
            <person name="Kobayashi Y."/>
            <person name="Koetter P."/>
            <person name="Koningstein G."/>
            <person name="Krogh S."/>
            <person name="Kumano M."/>
            <person name="Kurita K."/>
            <person name="Lapidus A."/>
            <person name="Lardinois S."/>
            <person name="Lauber J."/>
            <person name="Lazarevic V."/>
            <person name="Lee S.-M."/>
            <person name="Levine A."/>
            <person name="Liu H."/>
            <person name="Masuda S."/>
            <person name="Mauel C."/>
            <person name="Medigue C."/>
            <person name="Medina N."/>
            <person name="Mellado R.P."/>
            <person name="Mizuno M."/>
            <person name="Moestl D."/>
            <person name="Nakai S."/>
            <person name="Noback M."/>
            <person name="Noone D."/>
            <person name="O'Reilly M."/>
            <person name="Ogawa K."/>
            <person name="Ogiwara A."/>
            <person name="Oudega B."/>
            <person name="Park S.-H."/>
            <person name="Parro V."/>
            <person name="Pohl T.M."/>
            <person name="Portetelle D."/>
            <person name="Porwollik S."/>
            <person name="Prescott A.M."/>
            <person name="Presecan E."/>
            <person name="Pujic P."/>
            <person name="Purnelle B."/>
            <person name="Rapoport G."/>
            <person name="Rey M."/>
            <person name="Reynolds S."/>
            <person name="Rieger M."/>
            <person name="Rivolta C."/>
            <person name="Rocha E."/>
            <person name="Roche B."/>
            <person name="Rose M."/>
            <person name="Sadaie Y."/>
            <person name="Sato T."/>
            <person name="Scanlan E."/>
            <person name="Schleich S."/>
            <person name="Schroeter R."/>
            <person name="Scoffone F."/>
            <person name="Sekiguchi J."/>
            <person name="Sekowska A."/>
            <person name="Seror S.J."/>
            <person name="Serror P."/>
            <person name="Shin B.-S."/>
            <person name="Soldo B."/>
            <person name="Sorokin A."/>
            <person name="Tacconi E."/>
            <person name="Takagi T."/>
            <person name="Takahashi H."/>
            <person name="Takemaru K."/>
            <person name="Takeuchi M."/>
            <person name="Tamakoshi A."/>
            <person name="Tanaka T."/>
            <person name="Terpstra P."/>
            <person name="Tognoni A."/>
            <person name="Tosato V."/>
            <person name="Uchiyama S."/>
            <person name="Vandenbol M."/>
            <person name="Vannier F."/>
            <person name="Vassarotti A."/>
            <person name="Viari A."/>
            <person name="Wambutt R."/>
            <person name="Wedler E."/>
            <person name="Wedler H."/>
            <person name="Weitzenegger T."/>
            <person name="Winters P."/>
            <person name="Wipat A."/>
            <person name="Yamamoto H."/>
            <person name="Yamane K."/>
            <person name="Yasumoto K."/>
            <person name="Yata K."/>
            <person name="Yoshida K."/>
            <person name="Yoshikawa H.-F."/>
            <person name="Zumstein E."/>
            <person name="Yoshikawa H."/>
            <person name="Danchin A."/>
        </authorList>
    </citation>
    <scope>NUCLEOTIDE SEQUENCE [LARGE SCALE GENOMIC DNA]</scope>
    <source>
        <strain>168</strain>
    </source>
</reference>
<reference key="4">
    <citation type="journal article" date="1991" name="Mol. Microbiol.">
        <title>The spoIIIA operon of Bacillus subtilis defines a new temporal class of mother-cell-specific sporulation genes under the control of the sigma E form of RNA polymerase.</title>
        <authorList>
            <person name="Illing N."/>
            <person name="Errington J."/>
        </authorList>
    </citation>
    <scope>NUCLEOTIDE SEQUENCE [GENOMIC DNA] OF 54-93</scope>
    <source>
        <strain>168</strain>
    </source>
</reference>